<protein>
    <recommendedName>
        <fullName>Uncharacterized protein YGL117W</fullName>
    </recommendedName>
</protein>
<reference key="1">
    <citation type="journal article" date="1997" name="Nature">
        <title>The nucleotide sequence of Saccharomyces cerevisiae chromosome VII.</title>
        <authorList>
            <person name="Tettelin H."/>
            <person name="Agostoni-Carbone M.L."/>
            <person name="Albermann K."/>
            <person name="Albers M."/>
            <person name="Arroyo J."/>
            <person name="Backes U."/>
            <person name="Barreiros T."/>
            <person name="Bertani I."/>
            <person name="Bjourson A.J."/>
            <person name="Brueckner M."/>
            <person name="Bruschi C.V."/>
            <person name="Carignani G."/>
            <person name="Castagnoli L."/>
            <person name="Cerdan E."/>
            <person name="Clemente M.L."/>
            <person name="Coblenz A."/>
            <person name="Coglievina M."/>
            <person name="Coissac E."/>
            <person name="Defoor E."/>
            <person name="Del Bino S."/>
            <person name="Delius H."/>
            <person name="Delneri D."/>
            <person name="de Wergifosse P."/>
            <person name="Dujon B."/>
            <person name="Durand P."/>
            <person name="Entian K.-D."/>
            <person name="Eraso P."/>
            <person name="Escribano V."/>
            <person name="Fabiani L."/>
            <person name="Fartmann B."/>
            <person name="Feroli F."/>
            <person name="Feuermann M."/>
            <person name="Frontali L."/>
            <person name="Garcia-Gonzalez M."/>
            <person name="Garcia-Saez M.I."/>
            <person name="Goffeau A."/>
            <person name="Guerreiro P."/>
            <person name="Hani J."/>
            <person name="Hansen M."/>
            <person name="Hebling U."/>
            <person name="Hernandez K."/>
            <person name="Heumann K."/>
            <person name="Hilger F."/>
            <person name="Hofmann B."/>
            <person name="Indge K.J."/>
            <person name="James C.M."/>
            <person name="Klima R."/>
            <person name="Koetter P."/>
            <person name="Kramer B."/>
            <person name="Kramer W."/>
            <person name="Lauquin G."/>
            <person name="Leuther H."/>
            <person name="Louis E.J."/>
            <person name="Maillier E."/>
            <person name="Marconi A."/>
            <person name="Martegani E."/>
            <person name="Mazon M.J."/>
            <person name="Mazzoni C."/>
            <person name="McReynolds A.D.K."/>
            <person name="Melchioretto P."/>
            <person name="Mewes H.-W."/>
            <person name="Minenkova O."/>
            <person name="Mueller-Auer S."/>
            <person name="Nawrocki A."/>
            <person name="Netter P."/>
            <person name="Neu R."/>
            <person name="Nombela C."/>
            <person name="Oliver S.G."/>
            <person name="Panzeri L."/>
            <person name="Paoluzi S."/>
            <person name="Plevani P."/>
            <person name="Portetelle D."/>
            <person name="Portillo F."/>
            <person name="Potier S."/>
            <person name="Purnelle B."/>
            <person name="Rieger M."/>
            <person name="Riles L."/>
            <person name="Rinaldi T."/>
            <person name="Robben J."/>
            <person name="Rodrigues-Pousada C."/>
            <person name="Rodriguez-Belmonte E."/>
            <person name="Rodriguez-Torres A.M."/>
            <person name="Rose M."/>
            <person name="Ruzzi M."/>
            <person name="Saliola M."/>
            <person name="Sanchez-Perez M."/>
            <person name="Schaefer B."/>
            <person name="Schaefer M."/>
            <person name="Scharfe M."/>
            <person name="Schmidheini T."/>
            <person name="Schreer A."/>
            <person name="Skala J."/>
            <person name="Souciet J.-L."/>
            <person name="Steensma H.Y."/>
            <person name="Talla E."/>
            <person name="Thierry A."/>
            <person name="Vandenbol M."/>
            <person name="van der Aart Q.J.M."/>
            <person name="Van Dyck L."/>
            <person name="Vanoni M."/>
            <person name="Verhasselt P."/>
            <person name="Voet M."/>
            <person name="Volckaert G."/>
            <person name="Wambutt R."/>
            <person name="Watson M.D."/>
            <person name="Weber N."/>
            <person name="Wedler E."/>
            <person name="Wedler H."/>
            <person name="Wipfli P."/>
            <person name="Wolf K."/>
            <person name="Wright L.F."/>
            <person name="Zaccaria P."/>
            <person name="Zimmermann M."/>
            <person name="Zollner A."/>
            <person name="Kleine K."/>
        </authorList>
    </citation>
    <scope>NUCLEOTIDE SEQUENCE [LARGE SCALE GENOMIC DNA]</scope>
    <source>
        <strain>ATCC 204508 / S288c</strain>
    </source>
</reference>
<reference key="2">
    <citation type="journal article" date="2014" name="G3 (Bethesda)">
        <title>The reference genome sequence of Saccharomyces cerevisiae: Then and now.</title>
        <authorList>
            <person name="Engel S.R."/>
            <person name="Dietrich F.S."/>
            <person name="Fisk D.G."/>
            <person name="Binkley G."/>
            <person name="Balakrishnan R."/>
            <person name="Costanzo M.C."/>
            <person name="Dwight S.S."/>
            <person name="Hitz B.C."/>
            <person name="Karra K."/>
            <person name="Nash R.S."/>
            <person name="Weng S."/>
            <person name="Wong E.D."/>
            <person name="Lloyd P."/>
            <person name="Skrzypek M.S."/>
            <person name="Miyasato S.R."/>
            <person name="Simison M."/>
            <person name="Cherry J.M."/>
        </authorList>
    </citation>
    <scope>GENOME REANNOTATION</scope>
    <source>
        <strain>ATCC 204508 / S288c</strain>
    </source>
</reference>
<reference key="3">
    <citation type="journal article" date="2003" name="Nature">
        <title>Global analysis of protein expression in yeast.</title>
        <authorList>
            <person name="Ghaemmaghami S."/>
            <person name="Huh W.-K."/>
            <person name="Bower K."/>
            <person name="Howson R.W."/>
            <person name="Belle A."/>
            <person name="Dephoure N."/>
            <person name="O'Shea E.K."/>
            <person name="Weissman J.S."/>
        </authorList>
    </citation>
    <scope>LEVEL OF PROTEIN EXPRESSION [LARGE SCALE ANALYSIS]</scope>
</reference>
<reference key="4">
    <citation type="journal article" date="2008" name="Mol. Cell. Proteomics">
        <title>A multidimensional chromatography technology for in-depth phosphoproteome analysis.</title>
        <authorList>
            <person name="Albuquerque C.P."/>
            <person name="Smolka M.B."/>
            <person name="Payne S.H."/>
            <person name="Bafna V."/>
            <person name="Eng J."/>
            <person name="Zhou H."/>
        </authorList>
    </citation>
    <scope>PHOSPHORYLATION [LARGE SCALE ANALYSIS] AT SER-223</scope>
    <scope>IDENTIFICATION BY MASS SPECTROMETRY [LARGE SCALE ANALYSIS]</scope>
</reference>
<reference key="5">
    <citation type="journal article" date="2009" name="Science">
        <title>Global analysis of Cdk1 substrate phosphorylation sites provides insights into evolution.</title>
        <authorList>
            <person name="Holt L.J."/>
            <person name="Tuch B.B."/>
            <person name="Villen J."/>
            <person name="Johnson A.D."/>
            <person name="Gygi S.P."/>
            <person name="Morgan D.O."/>
        </authorList>
    </citation>
    <scope>PHOSPHORYLATION [LARGE SCALE ANALYSIS] AT SER-223</scope>
    <scope>IDENTIFICATION BY MASS SPECTROMETRY [LARGE SCALE ANALYSIS]</scope>
</reference>
<sequence length="265" mass="30755">MQPISIKDVESDQGKVYIVNALKDLVCKCLLEFVDIQIESFMYPDDPKCFTRIFKGNKIVNEASDKDSKVRSYPSSLGVGHSALFPLIYIRQKTNSLRFLNDPKQLPTPLVDDMNAKFKGIIKVYENLIHLYHSYQTVDCNNMNQQKLLGDLVSRGNFMLDILHGYVTIASTIVRDSKDANILIDTVNRFIHDTILFHKRIIHNSNAYTEYHVMKRGMQRNQSEETLVELEFRILDVSDVNLDNEFDDFLQHRKTSLKITHRRVI</sequence>
<feature type="chain" id="PRO_0000202747" description="Uncharacterized protein YGL117W">
    <location>
        <begin position="1"/>
        <end position="265"/>
    </location>
</feature>
<feature type="modified residue" description="Phosphoserine" evidence="2 3">
    <location>
        <position position="223"/>
    </location>
</feature>
<dbReference type="EMBL" id="Z72639">
    <property type="protein sequence ID" value="CAA96825.1"/>
    <property type="molecule type" value="Genomic_DNA"/>
</dbReference>
<dbReference type="EMBL" id="BK006941">
    <property type="protein sequence ID" value="DAA07991.1"/>
    <property type="molecule type" value="Genomic_DNA"/>
</dbReference>
<dbReference type="PIR" id="S64127">
    <property type="entry name" value="S64127"/>
</dbReference>
<dbReference type="BioGRID" id="33134">
    <property type="interactions" value="28"/>
</dbReference>
<dbReference type="DIP" id="DIP-6554N"/>
<dbReference type="FunCoup" id="P53133">
    <property type="interactions" value="68"/>
</dbReference>
<dbReference type="IntAct" id="P53133">
    <property type="interactions" value="13"/>
</dbReference>
<dbReference type="STRING" id="4932.YGL117W"/>
<dbReference type="iPTMnet" id="P53133"/>
<dbReference type="PaxDb" id="4932-YGL117W"/>
<dbReference type="PeptideAtlas" id="P53133"/>
<dbReference type="EnsemblFungi" id="YGL117W_mRNA">
    <property type="protein sequence ID" value="YGL117W"/>
    <property type="gene ID" value="YGL117W"/>
</dbReference>
<dbReference type="KEGG" id="sce:YGL117W"/>
<dbReference type="AGR" id="SGD:S000003085"/>
<dbReference type="SGD" id="S000003085">
    <property type="gene designation" value="YGL117W"/>
</dbReference>
<dbReference type="VEuPathDB" id="FungiDB:YGL117W"/>
<dbReference type="HOGENOM" id="CLU_1050343_0_0_1"/>
<dbReference type="InParanoid" id="P53133"/>
<dbReference type="OrthoDB" id="4067935at2759"/>
<dbReference type="BioCyc" id="YEAST:G3O-30615-MONOMER"/>
<dbReference type="BioGRID-ORCS" id="852761">
    <property type="hits" value="0 hits in 10 CRISPR screens"/>
</dbReference>
<dbReference type="CD-CODE" id="E03F929F">
    <property type="entry name" value="Stress granule"/>
</dbReference>
<dbReference type="PRO" id="PR:P53133"/>
<dbReference type="Proteomes" id="UP000002311">
    <property type="component" value="Chromosome VII"/>
</dbReference>
<dbReference type="RNAct" id="P53133">
    <property type="molecule type" value="protein"/>
</dbReference>
<comment type="miscellaneous">
    <text evidence="1">Present with 149 molecules/cell in log phase SD medium.</text>
</comment>
<evidence type="ECO:0000269" key="1">
    <source>
    </source>
</evidence>
<evidence type="ECO:0007744" key="2">
    <source>
    </source>
</evidence>
<evidence type="ECO:0007744" key="3">
    <source>
    </source>
</evidence>
<gene>
    <name type="ordered locus">YGL117W</name>
</gene>
<keyword id="KW-0597">Phosphoprotein</keyword>
<keyword id="KW-1185">Reference proteome</keyword>
<proteinExistence type="evidence at protein level"/>
<accession>P53133</accession>
<accession>D6VU30</accession>
<name>YGL7_YEAST</name>
<organism>
    <name type="scientific">Saccharomyces cerevisiae (strain ATCC 204508 / S288c)</name>
    <name type="common">Baker's yeast</name>
    <dbReference type="NCBI Taxonomy" id="559292"/>
    <lineage>
        <taxon>Eukaryota</taxon>
        <taxon>Fungi</taxon>
        <taxon>Dikarya</taxon>
        <taxon>Ascomycota</taxon>
        <taxon>Saccharomycotina</taxon>
        <taxon>Saccharomycetes</taxon>
        <taxon>Saccharomycetales</taxon>
        <taxon>Saccharomycetaceae</taxon>
        <taxon>Saccharomyces</taxon>
    </lineage>
</organism>